<evidence type="ECO:0000250" key="1"/>
<evidence type="ECO:0000255" key="2">
    <source>
        <dbReference type="PROSITE-ProRule" id="PRU00040"/>
    </source>
</evidence>
<evidence type="ECO:0000305" key="3"/>
<dbReference type="EMBL" id="EU085450">
    <property type="protein sequence ID" value="ABW82660.1"/>
    <property type="molecule type" value="mRNA"/>
</dbReference>
<dbReference type="SMR" id="B4XSY8"/>
<dbReference type="GO" id="GO:0005576">
    <property type="term" value="C:extracellular region"/>
    <property type="evidence" value="ECO:0007669"/>
    <property type="project" value="UniProtKB-SubCell"/>
</dbReference>
<dbReference type="GO" id="GO:0090729">
    <property type="term" value="F:toxin activity"/>
    <property type="evidence" value="ECO:0007669"/>
    <property type="project" value="UniProtKB-KW"/>
</dbReference>
<dbReference type="FunFam" id="3.10.100.10:FF:000087">
    <property type="entry name" value="Snaclec rhodocetin subunit delta"/>
    <property type="match status" value="1"/>
</dbReference>
<dbReference type="Gene3D" id="3.10.100.10">
    <property type="entry name" value="Mannose-Binding Protein A, subunit A"/>
    <property type="match status" value="1"/>
</dbReference>
<dbReference type="InterPro" id="IPR001304">
    <property type="entry name" value="C-type_lectin-like"/>
</dbReference>
<dbReference type="InterPro" id="IPR016186">
    <property type="entry name" value="C-type_lectin-like/link_sf"/>
</dbReference>
<dbReference type="InterPro" id="IPR016187">
    <property type="entry name" value="CTDL_fold"/>
</dbReference>
<dbReference type="InterPro" id="IPR050976">
    <property type="entry name" value="Snaclec"/>
</dbReference>
<dbReference type="PANTHER" id="PTHR22991">
    <property type="entry name" value="PROTEIN CBG13490"/>
    <property type="match status" value="1"/>
</dbReference>
<dbReference type="PANTHER" id="PTHR22991:SF40">
    <property type="entry name" value="PROTEIN CBG13490"/>
    <property type="match status" value="1"/>
</dbReference>
<dbReference type="Pfam" id="PF00059">
    <property type="entry name" value="Lectin_C"/>
    <property type="match status" value="1"/>
</dbReference>
<dbReference type="SMART" id="SM00034">
    <property type="entry name" value="CLECT"/>
    <property type="match status" value="1"/>
</dbReference>
<dbReference type="SUPFAM" id="SSF56436">
    <property type="entry name" value="C-type lectin-like"/>
    <property type="match status" value="1"/>
</dbReference>
<dbReference type="PROSITE" id="PS50041">
    <property type="entry name" value="C_TYPE_LECTIN_2"/>
    <property type="match status" value="1"/>
</dbReference>
<keyword id="KW-1015">Disulfide bond</keyword>
<keyword id="KW-1199">Hemostasis impairing toxin</keyword>
<keyword id="KW-0964">Secreted</keyword>
<keyword id="KW-0800">Toxin</keyword>
<name>SLAD_MACLB</name>
<sequence length="131" mass="15308">DQDCLPGWSFYEGHCYKVFNVKKTWEDAEKFCQKQSNGKHLATIEWLGKANFVAELVTLMKLETHVWIGLRVEDKRQQCSSHWTDGSAVSYENVVHNTKCFGLDQKTGYRTWVALRCELAYHFICMSRVPR</sequence>
<feature type="chain" id="PRO_0000356329" description="Snaclec A13">
    <location>
        <begin position="1"/>
        <end position="131"/>
    </location>
</feature>
<feature type="domain" description="C-type lectin" evidence="2">
    <location>
        <begin position="11"/>
        <end position="126"/>
    </location>
</feature>
<feature type="disulfide bond" evidence="2">
    <location>
        <begin position="4"/>
        <end position="15"/>
    </location>
</feature>
<feature type="disulfide bond" evidence="2">
    <location>
        <begin position="32"/>
        <end position="125"/>
    </location>
</feature>
<feature type="disulfide bond" description="Interchain" evidence="2">
    <location>
        <position position="79"/>
    </location>
</feature>
<feature type="disulfide bond" evidence="2">
    <location>
        <begin position="100"/>
        <end position="117"/>
    </location>
</feature>
<comment type="function">
    <text evidence="1">Interferes with one step of hemostasis (modulation of platelet aggregation, or coagulation cascade, for example).</text>
</comment>
<comment type="subunit">
    <text evidence="1">Heterodimer; disulfide-linked.</text>
</comment>
<comment type="subcellular location">
    <subcellularLocation>
        <location evidence="1">Secreted</location>
    </subcellularLocation>
</comment>
<comment type="tissue specificity">
    <text>Expressed by the venom gland.</text>
</comment>
<comment type="miscellaneous">
    <text>Shows greater sequence similarity to the alpha than beta subunits compared to other heterodimer snaclecs.</text>
</comment>
<comment type="similarity">
    <text evidence="3">Belongs to the snaclec family.</text>
</comment>
<reference key="1">
    <citation type="journal article" date="2009" name="Toxicon">
        <title>C-type lectin protein isoforms of Macrovipera lebetina: cDNA cloning and genetic diversity.</title>
        <authorList>
            <person name="Jebali J."/>
            <person name="Bazaa A."/>
            <person name="Sarray S."/>
            <person name="Benhaj K."/>
            <person name="Karboul A."/>
            <person name="El Ayeb M."/>
            <person name="Marrakchi N."/>
            <person name="Gargouri A."/>
        </authorList>
    </citation>
    <scope>NUCLEOTIDE SEQUENCE [MRNA]</scope>
</reference>
<proteinExistence type="evidence at transcript level"/>
<accession>B4XSY8</accession>
<organism>
    <name type="scientific">Macrovipera lebetinus</name>
    <name type="common">Levantine viper</name>
    <name type="synonym">Vipera lebetina</name>
    <dbReference type="NCBI Taxonomy" id="3148341"/>
    <lineage>
        <taxon>Eukaryota</taxon>
        <taxon>Metazoa</taxon>
        <taxon>Chordata</taxon>
        <taxon>Craniata</taxon>
        <taxon>Vertebrata</taxon>
        <taxon>Euteleostomi</taxon>
        <taxon>Lepidosauria</taxon>
        <taxon>Squamata</taxon>
        <taxon>Bifurcata</taxon>
        <taxon>Unidentata</taxon>
        <taxon>Episquamata</taxon>
        <taxon>Toxicofera</taxon>
        <taxon>Serpentes</taxon>
        <taxon>Colubroidea</taxon>
        <taxon>Viperidae</taxon>
        <taxon>Viperinae</taxon>
        <taxon>Macrovipera</taxon>
    </lineage>
</organism>
<protein>
    <recommendedName>
        <fullName>Snaclec A13</fullName>
    </recommendedName>
    <alternativeName>
        <fullName>C-type lectin A13</fullName>
    </alternativeName>
</protein>